<comment type="function">
    <text evidence="2">Removes uracil bases that are present in DNA as a result of either deamination of cytosine or misincorporation of dUMP instead of dTMP. Can remove uracil from double-stranded DNA containing either a U/G or U/A base pair as well as from single-stranded DNA.</text>
</comment>
<comment type="catalytic activity">
    <reaction evidence="2">
        <text>Hydrolyzes single-stranded DNA or mismatched double-stranded DNA and polynucleotides, releasing free uracil.</text>
        <dbReference type="EC" id="3.2.2.27"/>
    </reaction>
</comment>
<comment type="biophysicochemical properties">
    <temperatureDependence>
        <text evidence="2">Optimum temperature is 65 degrees Celsius.</text>
    </temperatureDependence>
</comment>
<comment type="subunit">
    <text evidence="2">Interacts with the sliding clamp PCNA3 subunit.</text>
</comment>
<comment type="similarity">
    <text evidence="4">Belongs to the uracil-DNA glycosylase (UDG) superfamily. Type 4 (UDGa) family.</text>
</comment>
<keyword id="KW-0004">4Fe-4S</keyword>
<keyword id="KW-0227">DNA damage</keyword>
<keyword id="KW-0234">DNA repair</keyword>
<keyword id="KW-0378">Hydrolase</keyword>
<keyword id="KW-0408">Iron</keyword>
<keyword id="KW-0411">Iron-sulfur</keyword>
<keyword id="KW-0479">Metal-binding</keyword>
<keyword id="KW-1185">Reference proteome</keyword>
<reference key="1">
    <citation type="journal article" date="2001" name="Proc. Natl. Acad. Sci. U.S.A.">
        <title>The complete genome of the crenarchaeon Sulfolobus solfataricus P2.</title>
        <authorList>
            <person name="She Q."/>
            <person name="Singh R.K."/>
            <person name="Confalonieri F."/>
            <person name="Zivanovic Y."/>
            <person name="Allard G."/>
            <person name="Awayez M.J."/>
            <person name="Chan-Weiher C.C.-Y."/>
            <person name="Clausen I.G."/>
            <person name="Curtis B.A."/>
            <person name="De Moors A."/>
            <person name="Erauso G."/>
            <person name="Fletcher C."/>
            <person name="Gordon P.M.K."/>
            <person name="Heikamp-de Jong I."/>
            <person name="Jeffries A.C."/>
            <person name="Kozera C.J."/>
            <person name="Medina N."/>
            <person name="Peng X."/>
            <person name="Thi-Ngoc H.P."/>
            <person name="Redder P."/>
            <person name="Schenk M.E."/>
            <person name="Theriault C."/>
            <person name="Tolstrup N."/>
            <person name="Charlebois R.L."/>
            <person name="Doolittle W.F."/>
            <person name="Duguet M."/>
            <person name="Gaasterland T."/>
            <person name="Garrett R.A."/>
            <person name="Ragan M.A."/>
            <person name="Sensen C.W."/>
            <person name="Van der Oost J."/>
        </authorList>
    </citation>
    <scope>NUCLEOTIDE SEQUENCE [LARGE SCALE GENOMIC DNA]</scope>
    <source>
        <strain>ATCC 35092 / DSM 1617 / JCM 11322 / P2</strain>
    </source>
</reference>
<reference key="2">
    <citation type="journal article" date="2005" name="Biochem. J.">
        <title>Characterization of an archaeal family 4 uracil DNA glycosylase and its interaction with PCNA and chromatin proteins.</title>
        <authorList>
            <person name="Dionne I."/>
            <person name="Bell S.D."/>
        </authorList>
    </citation>
    <scope>FUNCTION</scope>
    <scope>CATALYTIC ACTIVITY</scope>
    <scope>BIOPHYSICOCHEMICAL PROPERTIES</scope>
    <scope>INTERACTION WITH PCNA3</scope>
</reference>
<organism>
    <name type="scientific">Saccharolobus solfataricus (strain ATCC 35092 / DSM 1617 / JCM 11322 / P2)</name>
    <name type="common">Sulfolobus solfataricus</name>
    <dbReference type="NCBI Taxonomy" id="273057"/>
    <lineage>
        <taxon>Archaea</taxon>
        <taxon>Thermoproteota</taxon>
        <taxon>Thermoprotei</taxon>
        <taxon>Sulfolobales</taxon>
        <taxon>Sulfolobaceae</taxon>
        <taxon>Saccharolobus</taxon>
    </lineage>
</organism>
<feature type="chain" id="PRO_0000439185" description="Type-4 uracil-DNA glycosylase">
    <location>
        <begin position="1"/>
        <end position="216"/>
    </location>
</feature>
<feature type="binding site" evidence="1">
    <location>
        <position position="14"/>
    </location>
    <ligand>
        <name>[4Fe-4S] cluster</name>
        <dbReference type="ChEBI" id="CHEBI:49883"/>
    </ligand>
</feature>
<feature type="binding site" evidence="1">
    <location>
        <position position="17"/>
    </location>
    <ligand>
        <name>[4Fe-4S] cluster</name>
        <dbReference type="ChEBI" id="CHEBI:49883"/>
    </ligand>
</feature>
<feature type="binding site" evidence="1">
    <location>
        <begin position="41"/>
        <end position="43"/>
    </location>
    <ligand>
        <name>uracil</name>
        <dbReference type="ChEBI" id="CHEBI:17568"/>
    </ligand>
</feature>
<feature type="binding site" evidence="1">
    <location>
        <position position="55"/>
    </location>
    <ligand>
        <name>uracil</name>
        <dbReference type="ChEBI" id="CHEBI:17568"/>
    </ligand>
</feature>
<feature type="binding site" evidence="1">
    <location>
        <position position="82"/>
    </location>
    <ligand>
        <name>uracil</name>
        <dbReference type="ChEBI" id="CHEBI:17568"/>
    </ligand>
</feature>
<feature type="binding site" evidence="1">
    <location>
        <position position="86"/>
    </location>
    <ligand>
        <name>[4Fe-4S] cluster</name>
        <dbReference type="ChEBI" id="CHEBI:49883"/>
    </ligand>
</feature>
<feature type="binding site" evidence="1">
    <location>
        <position position="102"/>
    </location>
    <ligand>
        <name>[4Fe-4S] cluster</name>
        <dbReference type="ChEBI" id="CHEBI:49883"/>
    </ligand>
</feature>
<feature type="binding site" evidence="1">
    <location>
        <position position="164"/>
    </location>
    <ligand>
        <name>uracil</name>
        <dbReference type="ChEBI" id="CHEBI:17568"/>
    </ligand>
</feature>
<name>UDGA_SACS2</name>
<dbReference type="EC" id="3.2.2.27" evidence="2"/>
<dbReference type="EMBL" id="AE006641">
    <property type="protein sequence ID" value="AAK42437.1"/>
    <property type="molecule type" value="Genomic_DNA"/>
</dbReference>
<dbReference type="PIR" id="F90397">
    <property type="entry name" value="F90397"/>
</dbReference>
<dbReference type="SMR" id="Q97WF1"/>
<dbReference type="STRING" id="273057.SSO2275"/>
<dbReference type="PaxDb" id="273057-SSO2275"/>
<dbReference type="EnsemblBacteria" id="AAK42437">
    <property type="protein sequence ID" value="AAK42437"/>
    <property type="gene ID" value="SSO2275"/>
</dbReference>
<dbReference type="KEGG" id="sso:SSO2275"/>
<dbReference type="PATRIC" id="fig|273057.12.peg.2367"/>
<dbReference type="eggNOG" id="arCOG00905">
    <property type="taxonomic scope" value="Archaea"/>
</dbReference>
<dbReference type="HOGENOM" id="CLU_044815_1_3_2"/>
<dbReference type="InParanoid" id="Q97WF1"/>
<dbReference type="PhylomeDB" id="Q97WF1"/>
<dbReference type="Proteomes" id="UP000001974">
    <property type="component" value="Chromosome"/>
</dbReference>
<dbReference type="GO" id="GO:0051539">
    <property type="term" value="F:4 iron, 4 sulfur cluster binding"/>
    <property type="evidence" value="ECO:0007669"/>
    <property type="project" value="UniProtKB-KW"/>
</dbReference>
<dbReference type="GO" id="GO:0046872">
    <property type="term" value="F:metal ion binding"/>
    <property type="evidence" value="ECO:0007669"/>
    <property type="project" value="UniProtKB-KW"/>
</dbReference>
<dbReference type="GO" id="GO:0004844">
    <property type="term" value="F:uracil DNA N-glycosylase activity"/>
    <property type="evidence" value="ECO:0000314"/>
    <property type="project" value="UniProtKB"/>
</dbReference>
<dbReference type="GO" id="GO:0006281">
    <property type="term" value="P:DNA repair"/>
    <property type="evidence" value="ECO:0000314"/>
    <property type="project" value="UniProtKB"/>
</dbReference>
<dbReference type="CDD" id="cd10030">
    <property type="entry name" value="UDG-F4_TTUDGA_SPO1dp_like"/>
    <property type="match status" value="1"/>
</dbReference>
<dbReference type="FunFam" id="3.40.470.10:FF:000013">
    <property type="entry name" value="Type-4 uracil-DNA glycosylase"/>
    <property type="match status" value="1"/>
</dbReference>
<dbReference type="Gene3D" id="3.40.470.10">
    <property type="entry name" value="Uracil-DNA glycosylase-like domain"/>
    <property type="match status" value="1"/>
</dbReference>
<dbReference type="InterPro" id="IPR053423">
    <property type="entry name" value="Type-4_UDG"/>
</dbReference>
<dbReference type="InterPro" id="IPR051536">
    <property type="entry name" value="UDG_Type-4/5"/>
</dbReference>
<dbReference type="InterPro" id="IPR005273">
    <property type="entry name" value="Ura-DNA_glyco_family4"/>
</dbReference>
<dbReference type="InterPro" id="IPR005122">
    <property type="entry name" value="Uracil-DNA_glycosylase-like"/>
</dbReference>
<dbReference type="InterPro" id="IPR036895">
    <property type="entry name" value="Uracil-DNA_glycosylase-like_sf"/>
</dbReference>
<dbReference type="NCBIfam" id="NF040953">
    <property type="entry name" value="Arch_udg"/>
    <property type="match status" value="1"/>
</dbReference>
<dbReference type="NCBIfam" id="TIGR00758">
    <property type="entry name" value="UDG_fam4"/>
    <property type="match status" value="1"/>
</dbReference>
<dbReference type="PANTHER" id="PTHR33693:SF1">
    <property type="entry name" value="TYPE-4 URACIL-DNA GLYCOSYLASE"/>
    <property type="match status" value="1"/>
</dbReference>
<dbReference type="PANTHER" id="PTHR33693">
    <property type="entry name" value="TYPE-5 URACIL-DNA GLYCOSYLASE"/>
    <property type="match status" value="1"/>
</dbReference>
<dbReference type="Pfam" id="PF03167">
    <property type="entry name" value="UDG"/>
    <property type="match status" value="1"/>
</dbReference>
<dbReference type="SMART" id="SM00986">
    <property type="entry name" value="UDG"/>
    <property type="match status" value="1"/>
</dbReference>
<dbReference type="SMART" id="SM00987">
    <property type="entry name" value="UreE_C"/>
    <property type="match status" value="1"/>
</dbReference>
<dbReference type="SUPFAM" id="SSF52141">
    <property type="entry name" value="Uracil-DNA glycosylase-like"/>
    <property type="match status" value="1"/>
</dbReference>
<accession>Q97WF1</accession>
<gene>
    <name evidence="3" type="primary">udg1</name>
    <name evidence="5" type="ordered locus">SSO2275</name>
</gene>
<protein>
    <recommendedName>
        <fullName evidence="4">Type-4 uracil-DNA glycosylase</fullName>
        <ecNumber evidence="2">3.2.2.27</ecNumber>
    </recommendedName>
    <alternativeName>
        <fullName evidence="3">UDG1</fullName>
    </alternativeName>
</protein>
<sequence length="216" mass="24498">MDNLDLIADEVRKCQKCKLWKFRKNAVPGEGNSKAEIMFIGEAPGENEDIEGKPFVGVAGKLLTRLINEILGLSREDVFITNLVKCRPPNNRDPEEDEILACSPYLTRQIESIRPHIIITLGRHSTSYLFKKMNMKMESIGKVRGKFYTWNIYGYKILVFPTYHPAAALYNPPIRKVLEEDFRKVKEALSSKPITLDNFLYGSGDKGEKGNSNSGK</sequence>
<evidence type="ECO:0000250" key="1">
    <source>
        <dbReference type="UniProtKB" id="Q5SKC5"/>
    </source>
</evidence>
<evidence type="ECO:0000269" key="2">
    <source>
    </source>
</evidence>
<evidence type="ECO:0000303" key="3">
    <source>
    </source>
</evidence>
<evidence type="ECO:0000305" key="4"/>
<evidence type="ECO:0000312" key="5">
    <source>
        <dbReference type="EMBL" id="AAK42437.1"/>
    </source>
</evidence>
<proteinExistence type="evidence at protein level"/>